<feature type="transit peptide" description="Mitochondrion" evidence="1">
    <location>
        <begin position="1"/>
        <end position="45"/>
    </location>
</feature>
<feature type="chain" id="PRO_0000026778" description="Mitochondrial-processing peptidase subunit beta">
    <location>
        <begin position="46"/>
        <end position="489"/>
    </location>
</feature>
<feature type="active site" description="Proton acceptor" evidence="4">
    <location>
        <position position="104"/>
    </location>
</feature>
<feature type="binding site" evidence="4">
    <location>
        <position position="101"/>
    </location>
    <ligand>
        <name>Zn(2+)</name>
        <dbReference type="ChEBI" id="CHEBI:29105"/>
    </ligand>
</feature>
<feature type="binding site" evidence="4">
    <location>
        <position position="105"/>
    </location>
    <ligand>
        <name>Zn(2+)</name>
        <dbReference type="ChEBI" id="CHEBI:29105"/>
    </ligand>
</feature>
<feature type="binding site" evidence="4">
    <location>
        <position position="181"/>
    </location>
    <ligand>
        <name>Zn(2+)</name>
        <dbReference type="ChEBI" id="CHEBI:29105"/>
    </ligand>
</feature>
<feature type="site" description="Required for the specific determination of the substrate cleavage site" evidence="3">
    <location>
        <position position="191"/>
    </location>
</feature>
<feature type="site" description="Required for the specific determination of the substrate cleavage site" evidence="3">
    <location>
        <position position="195"/>
    </location>
</feature>
<reference key="1">
    <citation type="journal article" date="2005" name="Science">
        <title>The transcriptional landscape of the mammalian genome.</title>
        <authorList>
            <person name="Carninci P."/>
            <person name="Kasukawa T."/>
            <person name="Katayama S."/>
            <person name="Gough J."/>
            <person name="Frith M.C."/>
            <person name="Maeda N."/>
            <person name="Oyama R."/>
            <person name="Ravasi T."/>
            <person name="Lenhard B."/>
            <person name="Wells C."/>
            <person name="Kodzius R."/>
            <person name="Shimokawa K."/>
            <person name="Bajic V.B."/>
            <person name="Brenner S.E."/>
            <person name="Batalov S."/>
            <person name="Forrest A.R."/>
            <person name="Zavolan M."/>
            <person name="Davis M.J."/>
            <person name="Wilming L.G."/>
            <person name="Aidinis V."/>
            <person name="Allen J.E."/>
            <person name="Ambesi-Impiombato A."/>
            <person name="Apweiler R."/>
            <person name="Aturaliya R.N."/>
            <person name="Bailey T.L."/>
            <person name="Bansal M."/>
            <person name="Baxter L."/>
            <person name="Beisel K.W."/>
            <person name="Bersano T."/>
            <person name="Bono H."/>
            <person name="Chalk A.M."/>
            <person name="Chiu K.P."/>
            <person name="Choudhary V."/>
            <person name="Christoffels A."/>
            <person name="Clutterbuck D.R."/>
            <person name="Crowe M.L."/>
            <person name="Dalla E."/>
            <person name="Dalrymple B.P."/>
            <person name="de Bono B."/>
            <person name="Della Gatta G."/>
            <person name="di Bernardo D."/>
            <person name="Down T."/>
            <person name="Engstrom P."/>
            <person name="Fagiolini M."/>
            <person name="Faulkner G."/>
            <person name="Fletcher C.F."/>
            <person name="Fukushima T."/>
            <person name="Furuno M."/>
            <person name="Futaki S."/>
            <person name="Gariboldi M."/>
            <person name="Georgii-Hemming P."/>
            <person name="Gingeras T.R."/>
            <person name="Gojobori T."/>
            <person name="Green R.E."/>
            <person name="Gustincich S."/>
            <person name="Harbers M."/>
            <person name="Hayashi Y."/>
            <person name="Hensch T.K."/>
            <person name="Hirokawa N."/>
            <person name="Hill D."/>
            <person name="Huminiecki L."/>
            <person name="Iacono M."/>
            <person name="Ikeo K."/>
            <person name="Iwama A."/>
            <person name="Ishikawa T."/>
            <person name="Jakt M."/>
            <person name="Kanapin A."/>
            <person name="Katoh M."/>
            <person name="Kawasawa Y."/>
            <person name="Kelso J."/>
            <person name="Kitamura H."/>
            <person name="Kitano H."/>
            <person name="Kollias G."/>
            <person name="Krishnan S.P."/>
            <person name="Kruger A."/>
            <person name="Kummerfeld S.K."/>
            <person name="Kurochkin I.V."/>
            <person name="Lareau L.F."/>
            <person name="Lazarevic D."/>
            <person name="Lipovich L."/>
            <person name="Liu J."/>
            <person name="Liuni S."/>
            <person name="McWilliam S."/>
            <person name="Madan Babu M."/>
            <person name="Madera M."/>
            <person name="Marchionni L."/>
            <person name="Matsuda H."/>
            <person name="Matsuzawa S."/>
            <person name="Miki H."/>
            <person name="Mignone F."/>
            <person name="Miyake S."/>
            <person name="Morris K."/>
            <person name="Mottagui-Tabar S."/>
            <person name="Mulder N."/>
            <person name="Nakano N."/>
            <person name="Nakauchi H."/>
            <person name="Ng P."/>
            <person name="Nilsson R."/>
            <person name="Nishiguchi S."/>
            <person name="Nishikawa S."/>
            <person name="Nori F."/>
            <person name="Ohara O."/>
            <person name="Okazaki Y."/>
            <person name="Orlando V."/>
            <person name="Pang K.C."/>
            <person name="Pavan W.J."/>
            <person name="Pavesi G."/>
            <person name="Pesole G."/>
            <person name="Petrovsky N."/>
            <person name="Piazza S."/>
            <person name="Reed J."/>
            <person name="Reid J.F."/>
            <person name="Ring B.Z."/>
            <person name="Ringwald M."/>
            <person name="Rost B."/>
            <person name="Ruan Y."/>
            <person name="Salzberg S.L."/>
            <person name="Sandelin A."/>
            <person name="Schneider C."/>
            <person name="Schoenbach C."/>
            <person name="Sekiguchi K."/>
            <person name="Semple C.A."/>
            <person name="Seno S."/>
            <person name="Sessa L."/>
            <person name="Sheng Y."/>
            <person name="Shibata Y."/>
            <person name="Shimada H."/>
            <person name="Shimada K."/>
            <person name="Silva D."/>
            <person name="Sinclair B."/>
            <person name="Sperling S."/>
            <person name="Stupka E."/>
            <person name="Sugiura K."/>
            <person name="Sultana R."/>
            <person name="Takenaka Y."/>
            <person name="Taki K."/>
            <person name="Tammoja K."/>
            <person name="Tan S.L."/>
            <person name="Tang S."/>
            <person name="Taylor M.S."/>
            <person name="Tegner J."/>
            <person name="Teichmann S.A."/>
            <person name="Ueda H.R."/>
            <person name="van Nimwegen E."/>
            <person name="Verardo R."/>
            <person name="Wei C.L."/>
            <person name="Yagi K."/>
            <person name="Yamanishi H."/>
            <person name="Zabarovsky E."/>
            <person name="Zhu S."/>
            <person name="Zimmer A."/>
            <person name="Hide W."/>
            <person name="Bult C."/>
            <person name="Grimmond S.M."/>
            <person name="Teasdale R.D."/>
            <person name="Liu E.T."/>
            <person name="Brusic V."/>
            <person name="Quackenbush J."/>
            <person name="Wahlestedt C."/>
            <person name="Mattick J.S."/>
            <person name="Hume D.A."/>
            <person name="Kai C."/>
            <person name="Sasaki D."/>
            <person name="Tomaru Y."/>
            <person name="Fukuda S."/>
            <person name="Kanamori-Katayama M."/>
            <person name="Suzuki M."/>
            <person name="Aoki J."/>
            <person name="Arakawa T."/>
            <person name="Iida J."/>
            <person name="Imamura K."/>
            <person name="Itoh M."/>
            <person name="Kato T."/>
            <person name="Kawaji H."/>
            <person name="Kawagashira N."/>
            <person name="Kawashima T."/>
            <person name="Kojima M."/>
            <person name="Kondo S."/>
            <person name="Konno H."/>
            <person name="Nakano K."/>
            <person name="Ninomiya N."/>
            <person name="Nishio T."/>
            <person name="Okada M."/>
            <person name="Plessy C."/>
            <person name="Shibata K."/>
            <person name="Shiraki T."/>
            <person name="Suzuki S."/>
            <person name="Tagami M."/>
            <person name="Waki K."/>
            <person name="Watahiki A."/>
            <person name="Okamura-Oho Y."/>
            <person name="Suzuki H."/>
            <person name="Kawai J."/>
            <person name="Hayashizaki Y."/>
        </authorList>
    </citation>
    <scope>NUCLEOTIDE SEQUENCE [LARGE SCALE MRNA]</scope>
    <source>
        <strain>C57BL/6J</strain>
        <tissue>Embryonic head</tissue>
    </source>
</reference>
<reference key="2">
    <citation type="journal article" date="2010" name="Cell">
        <title>A tissue-specific atlas of mouse protein phosphorylation and expression.</title>
        <authorList>
            <person name="Huttlin E.L."/>
            <person name="Jedrychowski M.P."/>
            <person name="Elias J.E."/>
            <person name="Goswami T."/>
            <person name="Rad R."/>
            <person name="Beausoleil S.A."/>
            <person name="Villen J."/>
            <person name="Haas W."/>
            <person name="Sowa M.E."/>
            <person name="Gygi S.P."/>
        </authorList>
    </citation>
    <scope>IDENTIFICATION BY MASS SPECTROMETRY [LARGE SCALE ANALYSIS]</scope>
    <source>
        <tissue>Brown adipose tissue</tissue>
        <tissue>Heart</tissue>
        <tissue>Kidney</tissue>
        <tissue>Liver</tissue>
        <tissue>Lung</tissue>
        <tissue>Pancreas</tissue>
        <tissue>Spleen</tissue>
        <tissue>Testis</tissue>
    </source>
</reference>
<comment type="function">
    <text evidence="1 3">Catalytic subunit of the essential mitochondrial processing protease (MPP), which cleaves the mitochondrial sequence off newly imported precursors proteins (By similarity). Preferentially, cleaves after an arginine at position P2 (By similarity). Required for PINK1 turnover by coupling PINK1 mitochondrial import and cleavage, which results in subsequent PINK1 proteolysis (By similarity).</text>
</comment>
<comment type="catalytic activity">
    <reaction evidence="3">
        <text>Release of N-terminal transit peptides from precursor proteins imported into the mitochondrion, typically with Arg in position P2.</text>
        <dbReference type="EC" id="3.4.24.64"/>
    </reaction>
</comment>
<comment type="cofactor">
    <cofactor evidence="2">
        <name>Zn(2+)</name>
        <dbReference type="ChEBI" id="CHEBI:29105"/>
    </cofactor>
    <text evidence="2">Binds 1 zinc ion per subunit.</text>
</comment>
<comment type="activity regulation">
    <text evidence="2">Binding to PMPCA is required for catalytic activity.</text>
</comment>
<comment type="subunit">
    <text evidence="2">Heterodimer of PMPCA (alpha) and PMPCB (beta) subunits, forming the mitochondrial processing protease (MPP) in which PMPCA is involved in substrate recognition and binding and PMPCB is the catalytic subunit.</text>
</comment>
<comment type="subcellular location">
    <subcellularLocation>
        <location evidence="1">Mitochondrion matrix</location>
    </subcellularLocation>
</comment>
<comment type="similarity">
    <text evidence="5">Belongs to the peptidase M16 family.</text>
</comment>
<sequence length="489" mass="54614">MAAAALSRTLLPEARRRLWGFTRRLPLRRAAAQPLYFGGDRLRSTQAAPQVVLNVPETQVTCLENGLRVASENSGLSTCTVGLWIDAGSRYENEKNNGTAHFLEHMAFKGTKKRSQLDLELEIENMGAHLNAYTSREQTVYYAKAFSRDLPRAVEILADIIQNSTLGEAEIERERGVILREMQEVETNLQEVVFDYLHATAYQNTALGRTILGPTENIKSINRKDLVDYITTHYKGPRIVLAAAGGVCHNELLELAKFHFGDSLCSHKGAIPALPPCKFTGSEIRVRDDKMPLAHLAIAVEAVGWAHPDTICLMVANTLIGNWDRSFGGGMNLSSKLAQLTCHGNLCHSFQSFNTSYTDTGLWGLYMVCEQATVADMLHVVQNEWKRLCTDVTESEVARAKNLLKTNMLLQLDGSTPICEDIGRQMLCYNRRIPIPELEARIDAVDAETVRRVCTKYIHDKSPAIAALGPIERLPDFNQICSNMRWIRD</sequence>
<evidence type="ECO:0000250" key="1">
    <source>
        <dbReference type="UniProtKB" id="O75439"/>
    </source>
</evidence>
<evidence type="ECO:0000250" key="2">
    <source>
        <dbReference type="UniProtKB" id="P10507"/>
    </source>
</evidence>
<evidence type="ECO:0000250" key="3">
    <source>
        <dbReference type="UniProtKB" id="Q03346"/>
    </source>
</evidence>
<evidence type="ECO:0000255" key="4">
    <source>
        <dbReference type="PROSITE-ProRule" id="PRU10096"/>
    </source>
</evidence>
<evidence type="ECO:0000305" key="5"/>
<organism>
    <name type="scientific">Mus musculus</name>
    <name type="common">Mouse</name>
    <dbReference type="NCBI Taxonomy" id="10090"/>
    <lineage>
        <taxon>Eukaryota</taxon>
        <taxon>Metazoa</taxon>
        <taxon>Chordata</taxon>
        <taxon>Craniata</taxon>
        <taxon>Vertebrata</taxon>
        <taxon>Euteleostomi</taxon>
        <taxon>Mammalia</taxon>
        <taxon>Eutheria</taxon>
        <taxon>Euarchontoglires</taxon>
        <taxon>Glires</taxon>
        <taxon>Rodentia</taxon>
        <taxon>Myomorpha</taxon>
        <taxon>Muroidea</taxon>
        <taxon>Muridae</taxon>
        <taxon>Murinae</taxon>
        <taxon>Mus</taxon>
        <taxon>Mus</taxon>
    </lineage>
</organism>
<proteinExistence type="evidence at protein level"/>
<name>MPPB_MOUSE</name>
<gene>
    <name type="primary">Pmpcb</name>
</gene>
<keyword id="KW-0378">Hydrolase</keyword>
<keyword id="KW-0479">Metal-binding</keyword>
<keyword id="KW-0482">Metalloprotease</keyword>
<keyword id="KW-0496">Mitochondrion</keyword>
<keyword id="KW-0645">Protease</keyword>
<keyword id="KW-1185">Reference proteome</keyword>
<keyword id="KW-0809">Transit peptide</keyword>
<keyword id="KW-0862">Zinc</keyword>
<accession>Q9CXT8</accession>
<protein>
    <recommendedName>
        <fullName>Mitochondrial-processing peptidase subunit beta</fullName>
        <ecNumber evidence="3">3.4.24.64</ecNumber>
    </recommendedName>
    <alternativeName>
        <fullName>Beta-MPP</fullName>
    </alternativeName>
    <alternativeName>
        <fullName>P-52</fullName>
    </alternativeName>
</protein>
<dbReference type="EC" id="3.4.24.64" evidence="3"/>
<dbReference type="EMBL" id="AK013995">
    <property type="protein sequence ID" value="BAB29105.1"/>
    <property type="molecule type" value="mRNA"/>
</dbReference>
<dbReference type="CCDS" id="CCDS19106.1"/>
<dbReference type="RefSeq" id="NP_082707.1">
    <property type="nucleotide sequence ID" value="NM_028431.2"/>
</dbReference>
<dbReference type="SMR" id="Q9CXT8"/>
<dbReference type="BioGRID" id="215753">
    <property type="interactions" value="4"/>
</dbReference>
<dbReference type="FunCoup" id="Q9CXT8">
    <property type="interactions" value="3506"/>
</dbReference>
<dbReference type="STRING" id="10090.ENSMUSP00000030882"/>
<dbReference type="MEROPS" id="M16.973"/>
<dbReference type="GlyGen" id="Q9CXT8">
    <property type="glycosylation" value="2 sites, 1 N-linked glycan (1 site), 1 O-linked glycan (1 site)"/>
</dbReference>
<dbReference type="iPTMnet" id="Q9CXT8"/>
<dbReference type="PhosphoSitePlus" id="Q9CXT8"/>
<dbReference type="SwissPalm" id="Q9CXT8"/>
<dbReference type="REPRODUCTION-2DPAGE" id="Q9CXT8"/>
<dbReference type="jPOST" id="Q9CXT8"/>
<dbReference type="PaxDb" id="10090-ENSMUSP00000030882"/>
<dbReference type="ProteomicsDB" id="252609"/>
<dbReference type="Pumba" id="Q9CXT8"/>
<dbReference type="Antibodypedia" id="31179">
    <property type="antibodies" value="187 antibodies from 28 providers"/>
</dbReference>
<dbReference type="DNASU" id="73078"/>
<dbReference type="Ensembl" id="ENSMUST00000030882.12">
    <property type="protein sequence ID" value="ENSMUSP00000030882.6"/>
    <property type="gene ID" value="ENSMUSG00000029017.14"/>
</dbReference>
<dbReference type="GeneID" id="73078"/>
<dbReference type="KEGG" id="mmu:73078"/>
<dbReference type="UCSC" id="uc008wox.1">
    <property type="organism name" value="mouse"/>
</dbReference>
<dbReference type="AGR" id="MGI:1920328"/>
<dbReference type="CTD" id="9512"/>
<dbReference type="MGI" id="MGI:1920328">
    <property type="gene designation" value="Pmpcb"/>
</dbReference>
<dbReference type="VEuPathDB" id="HostDB:ENSMUSG00000029017"/>
<dbReference type="eggNOG" id="KOG0960">
    <property type="taxonomic scope" value="Eukaryota"/>
</dbReference>
<dbReference type="GeneTree" id="ENSGT00940000156608"/>
<dbReference type="HOGENOM" id="CLU_009902_4_0_1"/>
<dbReference type="InParanoid" id="Q9CXT8"/>
<dbReference type="OMA" id="IDVVCDM"/>
<dbReference type="OrthoDB" id="10251424at2759"/>
<dbReference type="PhylomeDB" id="Q9CXT8"/>
<dbReference type="TreeFam" id="TF105032"/>
<dbReference type="Reactome" id="R-MMU-8949664">
    <property type="pathway name" value="Processing of SMDT1"/>
</dbReference>
<dbReference type="BioGRID-ORCS" id="73078">
    <property type="hits" value="26 hits in 79 CRISPR screens"/>
</dbReference>
<dbReference type="ChiTaRS" id="Pmpcb">
    <property type="organism name" value="mouse"/>
</dbReference>
<dbReference type="PRO" id="PR:Q9CXT8"/>
<dbReference type="Proteomes" id="UP000000589">
    <property type="component" value="Chromosome 5"/>
</dbReference>
<dbReference type="RNAct" id="Q9CXT8">
    <property type="molecule type" value="protein"/>
</dbReference>
<dbReference type="Bgee" id="ENSMUSG00000029017">
    <property type="expression patterns" value="Expressed in spermatid and 264 other cell types or tissues"/>
</dbReference>
<dbReference type="ExpressionAtlas" id="Q9CXT8">
    <property type="expression patterns" value="baseline and differential"/>
</dbReference>
<dbReference type="GO" id="GO:0005743">
    <property type="term" value="C:mitochondrial inner membrane"/>
    <property type="evidence" value="ECO:0007005"/>
    <property type="project" value="MGI"/>
</dbReference>
<dbReference type="GO" id="GO:0005759">
    <property type="term" value="C:mitochondrial matrix"/>
    <property type="evidence" value="ECO:0007669"/>
    <property type="project" value="UniProtKB-SubCell"/>
</dbReference>
<dbReference type="GO" id="GO:0005739">
    <property type="term" value="C:mitochondrion"/>
    <property type="evidence" value="ECO:0007005"/>
    <property type="project" value="MGI"/>
</dbReference>
<dbReference type="GO" id="GO:0046872">
    <property type="term" value="F:metal ion binding"/>
    <property type="evidence" value="ECO:0007669"/>
    <property type="project" value="UniProtKB-KW"/>
</dbReference>
<dbReference type="GO" id="GO:0004222">
    <property type="term" value="F:metalloendopeptidase activity"/>
    <property type="evidence" value="ECO:0007669"/>
    <property type="project" value="UniProtKB-EC"/>
</dbReference>
<dbReference type="GO" id="GO:0006627">
    <property type="term" value="P:protein processing involved in protein targeting to mitochondrion"/>
    <property type="evidence" value="ECO:0007669"/>
    <property type="project" value="Ensembl"/>
</dbReference>
<dbReference type="FunFam" id="3.30.830.10:FF:000002">
    <property type="entry name" value="Mitochondrial-processing peptidase subunit beta"/>
    <property type="match status" value="1"/>
</dbReference>
<dbReference type="FunFam" id="3.30.830.10:FF:000001">
    <property type="entry name" value="Mitochondrial-processing peptidase subunit beta, mitochondrial"/>
    <property type="match status" value="1"/>
</dbReference>
<dbReference type="Gene3D" id="3.30.830.10">
    <property type="entry name" value="Metalloenzyme, LuxS/M16 peptidase-like"/>
    <property type="match status" value="2"/>
</dbReference>
<dbReference type="InterPro" id="IPR011249">
    <property type="entry name" value="Metalloenz_LuxS/M16"/>
</dbReference>
<dbReference type="InterPro" id="IPR050361">
    <property type="entry name" value="MPP/UQCRC_Complex"/>
</dbReference>
<dbReference type="InterPro" id="IPR011765">
    <property type="entry name" value="Pept_M16_N"/>
</dbReference>
<dbReference type="InterPro" id="IPR001431">
    <property type="entry name" value="Pept_M16_Zn_BS"/>
</dbReference>
<dbReference type="InterPro" id="IPR007863">
    <property type="entry name" value="Peptidase_M16_C"/>
</dbReference>
<dbReference type="PANTHER" id="PTHR11851">
    <property type="entry name" value="METALLOPROTEASE"/>
    <property type="match status" value="1"/>
</dbReference>
<dbReference type="PANTHER" id="PTHR11851:SF103">
    <property type="entry name" value="MITOCHONDRIAL-PROCESSING PEPTIDASE SUBUNIT BETA"/>
    <property type="match status" value="1"/>
</dbReference>
<dbReference type="Pfam" id="PF00675">
    <property type="entry name" value="Peptidase_M16"/>
    <property type="match status" value="1"/>
</dbReference>
<dbReference type="Pfam" id="PF05193">
    <property type="entry name" value="Peptidase_M16_C"/>
    <property type="match status" value="1"/>
</dbReference>
<dbReference type="SUPFAM" id="SSF63411">
    <property type="entry name" value="LuxS/MPP-like metallohydrolase"/>
    <property type="match status" value="2"/>
</dbReference>
<dbReference type="PROSITE" id="PS00143">
    <property type="entry name" value="INSULINASE"/>
    <property type="match status" value="1"/>
</dbReference>